<gene>
    <name type="primary">HHT3</name>
    <name type="ORF">LELG_03031</name>
</gene>
<name>H33_LODEL</name>
<feature type="initiator methionine" description="Removed" evidence="1">
    <location>
        <position position="1"/>
    </location>
</feature>
<feature type="chain" id="PRO_0000297747" description="Histone H3.3">
    <location>
        <begin position="2"/>
        <end position="136"/>
    </location>
</feature>
<feature type="region of interest" description="Disordered" evidence="2">
    <location>
        <begin position="1"/>
        <end position="42"/>
    </location>
</feature>
<feature type="modified residue" description="N6,N6,N6-trimethyllysine; alternate" evidence="1">
    <location>
        <position position="5"/>
    </location>
</feature>
<feature type="modified residue" description="N6,N6-dimethyllysine; alternate" evidence="1">
    <location>
        <position position="5"/>
    </location>
</feature>
<feature type="modified residue" description="N6-methyllysine; alternate" evidence="1">
    <location>
        <position position="5"/>
    </location>
</feature>
<feature type="modified residue" description="N6-acetyllysine; alternate" evidence="1">
    <location>
        <position position="10"/>
    </location>
</feature>
<feature type="modified residue" description="N6-methyllysine; alternate" evidence="1">
    <location>
        <position position="10"/>
    </location>
</feature>
<feature type="modified residue" description="Phosphoserine" evidence="1">
    <location>
        <position position="11"/>
    </location>
</feature>
<feature type="modified residue" description="N6,N6-dimethyllysine; alternate" evidence="1">
    <location>
        <position position="15"/>
    </location>
</feature>
<feature type="modified residue" description="N6-acetyllysine; alternate" evidence="1">
    <location>
        <position position="15"/>
    </location>
</feature>
<feature type="modified residue" description="N6-acetyllysine; alternate" evidence="1">
    <location>
        <position position="19"/>
    </location>
</feature>
<feature type="modified residue" description="N6-methyllysine; alternate" evidence="1">
    <location>
        <position position="19"/>
    </location>
</feature>
<feature type="modified residue" description="N6-acetyllysine; alternate" evidence="1">
    <location>
        <position position="24"/>
    </location>
</feature>
<feature type="modified residue" description="N6-methyllysine; alternate" evidence="1">
    <location>
        <position position="24"/>
    </location>
</feature>
<feature type="modified residue" description="N6,N6,N6-trimethyllysine; alternate" evidence="1">
    <location>
        <position position="28"/>
    </location>
</feature>
<feature type="modified residue" description="N6,N6-dimethyllysine; alternate" evidence="1">
    <location>
        <position position="28"/>
    </location>
</feature>
<feature type="modified residue" description="N6-acetyllysine; alternate" evidence="1">
    <location>
        <position position="28"/>
    </location>
</feature>
<feature type="modified residue" description="N6-methyllysine; alternate" evidence="1">
    <location>
        <position position="28"/>
    </location>
</feature>
<feature type="modified residue" description="N6,N6,N6-trimethyllysine; alternate" evidence="1">
    <location>
        <position position="37"/>
    </location>
</feature>
<feature type="modified residue" description="N6,N6-dimethyllysine; alternate" evidence="1">
    <location>
        <position position="37"/>
    </location>
</feature>
<feature type="modified residue" description="N6-acetyllysine; alternate" evidence="1">
    <location>
        <position position="37"/>
    </location>
</feature>
<feature type="modified residue" description="N6-methyllysine; alternate" evidence="1">
    <location>
        <position position="37"/>
    </location>
</feature>
<feature type="modified residue" description="N6-acetyllysine" evidence="1">
    <location>
        <position position="57"/>
    </location>
</feature>
<feature type="modified residue" description="N6-acetyllysine" evidence="1">
    <location>
        <position position="65"/>
    </location>
</feature>
<feature type="modified residue" description="N6,N6,N6-trimethyllysine; alternate" evidence="1">
    <location>
        <position position="80"/>
    </location>
</feature>
<feature type="modified residue" description="N6,N6-dimethyllysine; alternate" evidence="1">
    <location>
        <position position="80"/>
    </location>
</feature>
<feature type="modified residue" description="N6-methyllysine; alternate" evidence="1">
    <location>
        <position position="80"/>
    </location>
</feature>
<sequence>MARTKQTARKSTGGKAPRKQLASKAARKSAPVSGGVKKPHRYKPGTVALREIRRFQKSTELLIRKLPFQRLVREIAQDFKSDLRFQSSAIGALQEAVEAYLVGLFEDTNLCAIHAKRVTIQKKDIQLARRLRGERS</sequence>
<reference key="1">
    <citation type="journal article" date="2009" name="Nature">
        <title>Evolution of pathogenicity and sexual reproduction in eight Candida genomes.</title>
        <authorList>
            <person name="Butler G."/>
            <person name="Rasmussen M.D."/>
            <person name="Lin M.F."/>
            <person name="Santos M.A.S."/>
            <person name="Sakthikumar S."/>
            <person name="Munro C.A."/>
            <person name="Rheinbay E."/>
            <person name="Grabherr M."/>
            <person name="Forche A."/>
            <person name="Reedy J.L."/>
            <person name="Agrafioti I."/>
            <person name="Arnaud M.B."/>
            <person name="Bates S."/>
            <person name="Brown A.J.P."/>
            <person name="Brunke S."/>
            <person name="Costanzo M.C."/>
            <person name="Fitzpatrick D.A."/>
            <person name="de Groot P.W.J."/>
            <person name="Harris D."/>
            <person name="Hoyer L.L."/>
            <person name="Hube B."/>
            <person name="Klis F.M."/>
            <person name="Kodira C."/>
            <person name="Lennard N."/>
            <person name="Logue M.E."/>
            <person name="Martin R."/>
            <person name="Neiman A.M."/>
            <person name="Nikolaou E."/>
            <person name="Quail M.A."/>
            <person name="Quinn J."/>
            <person name="Santos M.C."/>
            <person name="Schmitzberger F.F."/>
            <person name="Sherlock G."/>
            <person name="Shah P."/>
            <person name="Silverstein K.A.T."/>
            <person name="Skrzypek M.S."/>
            <person name="Soll D."/>
            <person name="Staggs R."/>
            <person name="Stansfield I."/>
            <person name="Stumpf M.P.H."/>
            <person name="Sudbery P.E."/>
            <person name="Srikantha T."/>
            <person name="Zeng Q."/>
            <person name="Berman J."/>
            <person name="Berriman M."/>
            <person name="Heitman J."/>
            <person name="Gow N.A.R."/>
            <person name="Lorenz M.C."/>
            <person name="Birren B.W."/>
            <person name="Kellis M."/>
            <person name="Cuomo C.A."/>
        </authorList>
    </citation>
    <scope>NUCLEOTIDE SEQUENCE [LARGE SCALE GENOMIC DNA]</scope>
    <source>
        <strain>ATCC 11503 / BCRC 21390 / CBS 2605 / JCM 1781 / NBRC 1676 / NRRL YB-4239</strain>
    </source>
</reference>
<protein>
    <recommendedName>
        <fullName>Histone H3.3</fullName>
    </recommendedName>
</protein>
<dbReference type="EMBL" id="CH981526">
    <property type="protein sequence ID" value="EDK44852.1"/>
    <property type="molecule type" value="Genomic_DNA"/>
</dbReference>
<dbReference type="RefSeq" id="XP_001526473.1">
    <property type="nucleotide sequence ID" value="XM_001526423.1"/>
</dbReference>
<dbReference type="SMR" id="A5E094"/>
<dbReference type="FunCoup" id="A5E094">
    <property type="interactions" value="864"/>
</dbReference>
<dbReference type="STRING" id="379508.A5E094"/>
<dbReference type="GeneID" id="5232925"/>
<dbReference type="KEGG" id="lel:PVL30_003859"/>
<dbReference type="eggNOG" id="KOG1745">
    <property type="taxonomic scope" value="Eukaryota"/>
</dbReference>
<dbReference type="HOGENOM" id="CLU_078295_4_0_1"/>
<dbReference type="InParanoid" id="A5E094"/>
<dbReference type="OMA" id="THRFKPG"/>
<dbReference type="OrthoDB" id="5326060at2759"/>
<dbReference type="Proteomes" id="UP000001996">
    <property type="component" value="Unassembled WGS sequence"/>
</dbReference>
<dbReference type="GO" id="GO:0000786">
    <property type="term" value="C:nucleosome"/>
    <property type="evidence" value="ECO:0007669"/>
    <property type="project" value="UniProtKB-KW"/>
</dbReference>
<dbReference type="GO" id="GO:0005634">
    <property type="term" value="C:nucleus"/>
    <property type="evidence" value="ECO:0007669"/>
    <property type="project" value="UniProtKB-SubCell"/>
</dbReference>
<dbReference type="GO" id="GO:0003677">
    <property type="term" value="F:DNA binding"/>
    <property type="evidence" value="ECO:0007669"/>
    <property type="project" value="UniProtKB-KW"/>
</dbReference>
<dbReference type="GO" id="GO:0046982">
    <property type="term" value="F:protein heterodimerization activity"/>
    <property type="evidence" value="ECO:0007669"/>
    <property type="project" value="InterPro"/>
</dbReference>
<dbReference type="GO" id="GO:0030527">
    <property type="term" value="F:structural constituent of chromatin"/>
    <property type="evidence" value="ECO:0007669"/>
    <property type="project" value="InterPro"/>
</dbReference>
<dbReference type="CDD" id="cd22911">
    <property type="entry name" value="HFD_H3"/>
    <property type="match status" value="1"/>
</dbReference>
<dbReference type="FunFam" id="1.10.20.10:FF:000010">
    <property type="entry name" value="Histone H3"/>
    <property type="match status" value="1"/>
</dbReference>
<dbReference type="Gene3D" id="1.10.20.10">
    <property type="entry name" value="Histone, subunit A"/>
    <property type="match status" value="1"/>
</dbReference>
<dbReference type="InterPro" id="IPR009072">
    <property type="entry name" value="Histone-fold"/>
</dbReference>
<dbReference type="InterPro" id="IPR007125">
    <property type="entry name" value="Histone_H2A/H2B/H3"/>
</dbReference>
<dbReference type="InterPro" id="IPR000164">
    <property type="entry name" value="Histone_H3/CENP-A"/>
</dbReference>
<dbReference type="PANTHER" id="PTHR11426">
    <property type="entry name" value="HISTONE H3"/>
    <property type="match status" value="1"/>
</dbReference>
<dbReference type="Pfam" id="PF00125">
    <property type="entry name" value="Histone"/>
    <property type="match status" value="1"/>
</dbReference>
<dbReference type="PRINTS" id="PR00622">
    <property type="entry name" value="HISTONEH3"/>
</dbReference>
<dbReference type="SMART" id="SM00428">
    <property type="entry name" value="H3"/>
    <property type="match status" value="1"/>
</dbReference>
<dbReference type="SUPFAM" id="SSF47113">
    <property type="entry name" value="Histone-fold"/>
    <property type="match status" value="1"/>
</dbReference>
<dbReference type="PROSITE" id="PS00322">
    <property type="entry name" value="HISTONE_H3_1"/>
    <property type="match status" value="1"/>
</dbReference>
<dbReference type="PROSITE" id="PS00959">
    <property type="entry name" value="HISTONE_H3_2"/>
    <property type="match status" value="1"/>
</dbReference>
<proteinExistence type="inferred from homology"/>
<keyword id="KW-0007">Acetylation</keyword>
<keyword id="KW-0158">Chromosome</keyword>
<keyword id="KW-0238">DNA-binding</keyword>
<keyword id="KW-0488">Methylation</keyword>
<keyword id="KW-0544">Nucleosome core</keyword>
<keyword id="KW-0539">Nucleus</keyword>
<keyword id="KW-0597">Phosphoprotein</keyword>
<keyword id="KW-1185">Reference proteome</keyword>
<organism>
    <name type="scientific">Lodderomyces elongisporus (strain ATCC 11503 / CBS 2605 / JCM 1781 / NBRC 1676 / NRRL YB-4239)</name>
    <name type="common">Yeast</name>
    <name type="synonym">Saccharomyces elongisporus</name>
    <dbReference type="NCBI Taxonomy" id="379508"/>
    <lineage>
        <taxon>Eukaryota</taxon>
        <taxon>Fungi</taxon>
        <taxon>Dikarya</taxon>
        <taxon>Ascomycota</taxon>
        <taxon>Saccharomycotina</taxon>
        <taxon>Pichiomycetes</taxon>
        <taxon>Debaryomycetaceae</taxon>
        <taxon>Candida/Lodderomyces clade</taxon>
        <taxon>Lodderomyces</taxon>
    </lineage>
</organism>
<comment type="function">
    <text>Core component of nucleosome. Nucleosomes wrap and compact DNA into chromatin, limiting DNA accessibility to the cellular machineries which require DNA as a template. Histones thereby play a central role in transcription regulation, DNA repair, DNA replication and chromosomal stability. DNA accessibility is regulated via a complex set of post-translational modifications of histones, also called histone code, and nucleosome remodeling.</text>
</comment>
<comment type="subunit">
    <text>The nucleosome is a histone octamer containing two molecules each of H2A, H2B, H3 and H4 assembled in one H3-H4 heterotetramer and two H2A-H2B heterodimers. The octamer wraps approximately 147 bp of DNA.</text>
</comment>
<comment type="subcellular location">
    <subcellularLocation>
        <location evidence="1">Nucleus</location>
    </subcellularLocation>
    <subcellularLocation>
        <location evidence="1">Chromosome</location>
    </subcellularLocation>
</comment>
<comment type="PTM">
    <text evidence="1">Phosphorylated to form H3S10ph. H3S10ph promotes subsequent H3K14ac formation and is required for transcriptional activation through TBP recruitment to the promoters (By similarity).</text>
</comment>
<comment type="PTM">
    <text evidence="1">Mono-, di- and trimethylated by the COMPASS complex to form H3K4me1/2/3. H3K4me activates gene expression by regulating transcription elongation and plays a role in telomere length maintenance. H3K4me enrichment correlates with transcription levels, and occurs in a 5' to 3' gradient with H3K4me3 enrichment at the 5'-end of genes, shifting to H3K4me2 and then H3K4me1. Methylated by SET2 to form H3K36me. H3K36me represses gene expression. Methylated by DOT1 to form H3K79me. H3K79me is required for association of SIR proteins with telomeric regions and for telomeric silencing. The COMPASS-mediated formation of H3K4me2/3 and the DOT1-mediated formation of H3K79me require H2BK123ub1 (By similarity).</text>
</comment>
<comment type="PTM">
    <text evidence="1">Acetylation of histone H3 leads to transcriptional activation. H3K14ac formation by GCN5 is promoted by H3S10ph. H3K14ac can also be formed by ESA1. H3K56ac formation occurs predominantly in newly synthesized H3 molecules during G1, S and G2/M of the cell cycle and may be involved in DNA repair (By similarity).</text>
</comment>
<comment type="similarity">
    <text evidence="3">Belongs to the histone H3 family.</text>
</comment>
<comment type="caution">
    <text evidence="3">To ensure consistency between histone entries, we follow the 'Brno' nomenclature for histone modifications, with positions referring to those used in the literature for the 'closest' model organism. Due to slight variations in histone sequences between organisms and to the presence of initiator methionine in UniProtKB/Swiss-Prot sequences, the actual positions of modified amino acids in the sequence generally differ. In this entry the following conventions are used: H3K4me1/2/3 = mono-, di- and trimethylated Lys-5; H3K9ac = acetylated Lys-10; H3K9me1 = monomethylated Lys-10; H3S10ph = phosphorylated Ser-11; H3K14ac = acetylated Lys-15; H3K14me2 = dimethylated Lys-15; H3K18ac = acetylated Lys-19; H3K18me1 = monomethylated Lys-19; H3K23ac = acetylated Lys-24; H3K23me1 = monomethylated Lys-24; H3K27ac = acetylated Lys-28; H3K27me1/2/3 = mono-, di- and trimethylated Lys-28; H3K36ac = acetylated Lys-37; H3K36me1/2/3 = mono-, di- and trimethylated Lys-37; H3K56ac = acetylated Lys-57; H3K64ac = acetylated Lys-65; H3K79me1/2/3 = mono-, di- and trimethylated Lys-80.</text>
</comment>
<evidence type="ECO:0000250" key="1"/>
<evidence type="ECO:0000256" key="2">
    <source>
        <dbReference type="SAM" id="MobiDB-lite"/>
    </source>
</evidence>
<evidence type="ECO:0000305" key="3"/>
<accession>A5E094</accession>